<dbReference type="EMBL" id="AC006922">
    <property type="protein sequence ID" value="AAD31583.1"/>
    <property type="molecule type" value="Genomic_DNA"/>
</dbReference>
<dbReference type="EMBL" id="CP002685">
    <property type="protein sequence ID" value="AEC09330.1"/>
    <property type="molecule type" value="Genomic_DNA"/>
</dbReference>
<dbReference type="EMBL" id="AY461626">
    <property type="status" value="NOT_ANNOTATED_CDS"/>
    <property type="molecule type" value="mRNA"/>
</dbReference>
<dbReference type="EMBL" id="AY461627">
    <property type="status" value="NOT_ANNOTATED_CDS"/>
    <property type="molecule type" value="mRNA"/>
</dbReference>
<dbReference type="PIR" id="A84787">
    <property type="entry name" value="A84787"/>
</dbReference>
<dbReference type="RefSeq" id="NP_181235.1">
    <property type="nucleotide sequence ID" value="NM_129254.3"/>
</dbReference>
<dbReference type="SMR" id="Q9SJK9"/>
<dbReference type="FunCoup" id="Q9SJK9">
    <property type="interactions" value="452"/>
</dbReference>
<dbReference type="STRING" id="3702.Q9SJK9"/>
<dbReference type="PaxDb" id="3702-AT2G36980.1"/>
<dbReference type="EnsemblPlants" id="AT2G36980.1">
    <property type="protein sequence ID" value="AT2G36980.1"/>
    <property type="gene ID" value="AT2G36980"/>
</dbReference>
<dbReference type="GeneID" id="818272"/>
<dbReference type="Gramene" id="AT2G36980.1">
    <property type="protein sequence ID" value="AT2G36980.1"/>
    <property type="gene ID" value="AT2G36980"/>
</dbReference>
<dbReference type="KEGG" id="ath:AT2G36980"/>
<dbReference type="Araport" id="AT2G36980"/>
<dbReference type="TAIR" id="AT2G36980"/>
<dbReference type="eggNOG" id="KOG4197">
    <property type="taxonomic scope" value="Eukaryota"/>
</dbReference>
<dbReference type="HOGENOM" id="CLU_002706_0_1_1"/>
<dbReference type="InParanoid" id="Q9SJK9"/>
<dbReference type="OMA" id="HMELAHE"/>
<dbReference type="PhylomeDB" id="Q9SJK9"/>
<dbReference type="PRO" id="PR:Q9SJK9"/>
<dbReference type="Proteomes" id="UP000006548">
    <property type="component" value="Chromosome 2"/>
</dbReference>
<dbReference type="ExpressionAtlas" id="Q9SJK9">
    <property type="expression patterns" value="baseline and differential"/>
</dbReference>
<dbReference type="GO" id="GO:0005739">
    <property type="term" value="C:mitochondrion"/>
    <property type="evidence" value="ECO:0007669"/>
    <property type="project" value="UniProtKB-SubCell"/>
</dbReference>
<dbReference type="GO" id="GO:0003723">
    <property type="term" value="F:RNA binding"/>
    <property type="evidence" value="ECO:0007669"/>
    <property type="project" value="InterPro"/>
</dbReference>
<dbReference type="GO" id="GO:0009451">
    <property type="term" value="P:RNA modification"/>
    <property type="evidence" value="ECO:0007669"/>
    <property type="project" value="InterPro"/>
</dbReference>
<dbReference type="FunFam" id="1.25.40.10:FF:000158">
    <property type="entry name" value="pentatricopeptide repeat-containing protein At2g33680"/>
    <property type="match status" value="1"/>
</dbReference>
<dbReference type="FunFam" id="1.25.40.10:FF:001082">
    <property type="entry name" value="Pentatricopeptide repeat-containing protein mitochondrial"/>
    <property type="match status" value="1"/>
</dbReference>
<dbReference type="Gene3D" id="1.25.40.10">
    <property type="entry name" value="Tetratricopeptide repeat domain"/>
    <property type="match status" value="5"/>
</dbReference>
<dbReference type="InterPro" id="IPR046848">
    <property type="entry name" value="E_motif"/>
</dbReference>
<dbReference type="InterPro" id="IPR002885">
    <property type="entry name" value="Pentatricopeptide_rpt"/>
</dbReference>
<dbReference type="InterPro" id="IPR046960">
    <property type="entry name" value="PPR_At4g14850-like_plant"/>
</dbReference>
<dbReference type="InterPro" id="IPR011990">
    <property type="entry name" value="TPR-like_helical_dom_sf"/>
</dbReference>
<dbReference type="NCBIfam" id="TIGR00756">
    <property type="entry name" value="PPR"/>
    <property type="match status" value="6"/>
</dbReference>
<dbReference type="PANTHER" id="PTHR47926:SF465">
    <property type="entry name" value="PENTATRICOPEPTIDE REPEAT (PPR-LIKE) SUPERFAMILY PROTEIN"/>
    <property type="match status" value="1"/>
</dbReference>
<dbReference type="PANTHER" id="PTHR47926">
    <property type="entry name" value="PENTATRICOPEPTIDE REPEAT-CONTAINING PROTEIN"/>
    <property type="match status" value="1"/>
</dbReference>
<dbReference type="Pfam" id="PF20431">
    <property type="entry name" value="E_motif"/>
    <property type="match status" value="1"/>
</dbReference>
<dbReference type="Pfam" id="PF01535">
    <property type="entry name" value="PPR"/>
    <property type="match status" value="3"/>
</dbReference>
<dbReference type="Pfam" id="PF13041">
    <property type="entry name" value="PPR_2"/>
    <property type="match status" value="4"/>
</dbReference>
<dbReference type="PROSITE" id="PS51375">
    <property type="entry name" value="PPR"/>
    <property type="match status" value="14"/>
</dbReference>
<proteinExistence type="evidence at transcript level"/>
<protein>
    <recommendedName>
        <fullName>Pentatricopeptide repeat-containing protein At2g36980, mitochondrial</fullName>
    </recommendedName>
</protein>
<organism>
    <name type="scientific">Arabidopsis thaliana</name>
    <name type="common">Mouse-ear cress</name>
    <dbReference type="NCBI Taxonomy" id="3702"/>
    <lineage>
        <taxon>Eukaryota</taxon>
        <taxon>Viridiplantae</taxon>
        <taxon>Streptophyta</taxon>
        <taxon>Embryophyta</taxon>
        <taxon>Tracheophyta</taxon>
        <taxon>Spermatophyta</taxon>
        <taxon>Magnoliopsida</taxon>
        <taxon>eudicotyledons</taxon>
        <taxon>Gunneridae</taxon>
        <taxon>Pentapetalae</taxon>
        <taxon>rosids</taxon>
        <taxon>malvids</taxon>
        <taxon>Brassicales</taxon>
        <taxon>Brassicaceae</taxon>
        <taxon>Camelineae</taxon>
        <taxon>Arabidopsis</taxon>
    </lineage>
</organism>
<accession>Q9SJK9</accession>
<keyword id="KW-0496">Mitochondrion</keyword>
<keyword id="KW-1185">Reference proteome</keyword>
<keyword id="KW-0677">Repeat</keyword>
<keyword id="KW-0809">Transit peptide</keyword>
<reference key="1">
    <citation type="journal article" date="1999" name="Nature">
        <title>Sequence and analysis of chromosome 2 of the plant Arabidopsis thaliana.</title>
        <authorList>
            <person name="Lin X."/>
            <person name="Kaul S."/>
            <person name="Rounsley S.D."/>
            <person name="Shea T.P."/>
            <person name="Benito M.-I."/>
            <person name="Town C.D."/>
            <person name="Fujii C.Y."/>
            <person name="Mason T.M."/>
            <person name="Bowman C.L."/>
            <person name="Barnstead M.E."/>
            <person name="Feldblyum T.V."/>
            <person name="Buell C.R."/>
            <person name="Ketchum K.A."/>
            <person name="Lee J.J."/>
            <person name="Ronning C.M."/>
            <person name="Koo H.L."/>
            <person name="Moffat K.S."/>
            <person name="Cronin L.A."/>
            <person name="Shen M."/>
            <person name="Pai G."/>
            <person name="Van Aken S."/>
            <person name="Umayam L."/>
            <person name="Tallon L.J."/>
            <person name="Gill J.E."/>
            <person name="Adams M.D."/>
            <person name="Carrera A.J."/>
            <person name="Creasy T.H."/>
            <person name="Goodman H.M."/>
            <person name="Somerville C.R."/>
            <person name="Copenhaver G.P."/>
            <person name="Preuss D."/>
            <person name="Nierman W.C."/>
            <person name="White O."/>
            <person name="Eisen J.A."/>
            <person name="Salzberg S.L."/>
            <person name="Fraser C.M."/>
            <person name="Venter J.C."/>
        </authorList>
    </citation>
    <scope>NUCLEOTIDE SEQUENCE [LARGE SCALE GENOMIC DNA]</scope>
    <source>
        <strain>cv. Columbia</strain>
    </source>
</reference>
<reference key="2">
    <citation type="journal article" date="2017" name="Plant J.">
        <title>Araport11: a complete reannotation of the Arabidopsis thaliana reference genome.</title>
        <authorList>
            <person name="Cheng C.Y."/>
            <person name="Krishnakumar V."/>
            <person name="Chan A.P."/>
            <person name="Thibaud-Nissen F."/>
            <person name="Schobel S."/>
            <person name="Town C.D."/>
        </authorList>
    </citation>
    <scope>GENOME REANNOTATION</scope>
    <source>
        <strain>cv. Columbia</strain>
    </source>
</reference>
<reference key="3">
    <citation type="journal article" date="2005" name="Plant Physiol.">
        <title>Analysis of the cDNAs of hypothetical genes on Arabidopsis chromosome 2 reveals numerous transcript variants.</title>
        <authorList>
            <person name="Xiao Y.-L."/>
            <person name="Smith S.R."/>
            <person name="Ishmael N."/>
            <person name="Redman J.C."/>
            <person name="Kumar N."/>
            <person name="Monaghan E.L."/>
            <person name="Ayele M."/>
            <person name="Haas B.J."/>
            <person name="Wu H.C."/>
            <person name="Town C.D."/>
        </authorList>
    </citation>
    <scope>NUCLEOTIDE SEQUENCE [LARGE SCALE MRNA] OF 1-240</scope>
    <scope>NUCLEOTIDE SEQUENCE [LARGE SCALE MRNA] OF 540-625</scope>
    <source>
        <strain>cv. Columbia</strain>
    </source>
</reference>
<reference key="4">
    <citation type="journal article" date="2004" name="Plant Cell">
        <title>Genome-wide analysis of Arabidopsis pentatricopeptide repeat proteins reveals their essential role in organelle biogenesis.</title>
        <authorList>
            <person name="Lurin C."/>
            <person name="Andres C."/>
            <person name="Aubourg S."/>
            <person name="Bellaoui M."/>
            <person name="Bitton F."/>
            <person name="Bruyere C."/>
            <person name="Caboche M."/>
            <person name="Debast C."/>
            <person name="Gualberto J."/>
            <person name="Hoffmann B."/>
            <person name="Lecharny A."/>
            <person name="Le Ret M."/>
            <person name="Martin-Magniette M.-L."/>
            <person name="Mireau H."/>
            <person name="Peeters N."/>
            <person name="Renou J.-P."/>
            <person name="Szurek B."/>
            <person name="Taconnat L."/>
            <person name="Small I."/>
        </authorList>
    </citation>
    <scope>GENE FAMILY</scope>
</reference>
<comment type="subcellular location">
    <subcellularLocation>
        <location evidence="2">Mitochondrion</location>
    </subcellularLocation>
</comment>
<comment type="similarity">
    <text evidence="2">Belongs to the PPR family. PCMP-E subfamily.</text>
</comment>
<comment type="online information" name="Pentatricopeptide repeat proteins">
    <link uri="https://ppr.plantenergy.uwa.edu.au"/>
</comment>
<sequence length="625" mass="69097">MSVLVRLTSKIASLAKSGRIASARQVFDGMPELDTVAWNTMLTSYSRLGLHQEAIALFTQLRFSDAKPDDYSFTAILSTCASLGNVKFGRKIQSLVIRSGFCASLPVNNSLIDMYGKCSDTLSANKVFRDMCCDSRNEVTWCSLLFAYMNAEQFEAALDVFVEMPKRVAFAWNIMISGHAHCGKLESCLSLFKEMLESEFKPDCYTFSSLMNACSADSSNVVYGRMVHAVMLKNGWSSAVEAKNSVLSFYTKLGSRDDAMRELESIEVLTQVSWNSIIDACMKIGETEKALEVFHLAPEKNIVTWTTMITGYGRNGDGEQALRFFVEMMKSGVDSDHFAYGAVLHACSGLALLGHGKMIHGCLIHCGFQGYAYVGNALVNLYAKCGDIKEADRAFGDIANKDLVSWNTMLFAFGVHGLADQALKLYDNMIASGIKPDNVTFIGLLTTCSHSGLVEEGCMIFESMVKDYRIPLEVDHVTCMIDMFGRGGHLAEAKDLATTYSSLVTDSSNNSSWETLLGACSTHWHTELGREVSKVLKIAEPSEEMSFVLLSNLYCSTGRWKEGEDVRREMVERGMKKTPGCSWIEVGNQVSTFVVGDSSHPRLEELSETLNCLQHEMRNPETFGP</sequence>
<evidence type="ECO:0000255" key="1"/>
<evidence type="ECO:0000305" key="2"/>
<name>PP189_ARATH</name>
<gene>
    <name type="primary">PCMP-E73</name>
    <name type="ordered locus">At2g36980</name>
    <name type="ORF">T1J8.16</name>
</gene>
<feature type="transit peptide" description="Mitochondrion" evidence="1">
    <location>
        <begin position="1"/>
        <end position="7"/>
    </location>
</feature>
<feature type="chain" id="PRO_0000356048" description="Pentatricopeptide repeat-containing protein At2g36980, mitochondrial">
    <location>
        <begin position="8"/>
        <end position="625"/>
    </location>
</feature>
<feature type="repeat" description="PPR 1">
    <location>
        <begin position="3"/>
        <end position="33"/>
    </location>
</feature>
<feature type="repeat" description="PPR 2">
    <location>
        <begin position="34"/>
        <end position="68"/>
    </location>
</feature>
<feature type="repeat" description="PPR 3">
    <location>
        <begin position="69"/>
        <end position="103"/>
    </location>
</feature>
<feature type="repeat" description="PPR 4">
    <location>
        <begin position="104"/>
        <end position="134"/>
    </location>
</feature>
<feature type="repeat" description="PPR 5">
    <location>
        <begin position="137"/>
        <end position="167"/>
    </location>
</feature>
<feature type="repeat" description="PPR 6">
    <location>
        <begin position="168"/>
        <end position="202"/>
    </location>
</feature>
<feature type="repeat" description="PPR 7">
    <location>
        <begin position="203"/>
        <end position="238"/>
    </location>
</feature>
<feature type="repeat" description="PPR 8">
    <location>
        <begin position="239"/>
        <end position="269"/>
    </location>
</feature>
<feature type="repeat" description="PPR 9">
    <location>
        <begin position="270"/>
        <end position="300"/>
    </location>
</feature>
<feature type="repeat" description="PPR 10">
    <location>
        <begin position="301"/>
        <end position="335"/>
    </location>
</feature>
<feature type="repeat" description="PPR 11">
    <location>
        <begin position="336"/>
        <end position="370"/>
    </location>
</feature>
<feature type="repeat" description="PPR 12">
    <location>
        <begin position="371"/>
        <end position="401"/>
    </location>
</feature>
<feature type="repeat" description="PPR 13">
    <location>
        <begin position="402"/>
        <end position="436"/>
    </location>
</feature>
<feature type="repeat" description="PPR 14">
    <location>
        <begin position="437"/>
        <end position="471"/>
    </location>
</feature>
<feature type="repeat" description="PPR 15">
    <location>
        <begin position="473"/>
        <end position="503"/>
    </location>
</feature>
<feature type="region of interest" description="Type E motif">
    <location>
        <begin position="512"/>
        <end position="587"/>
    </location>
</feature>
<feature type="region of interest" description="Type E(+) motif">
    <location>
        <begin position="588"/>
        <end position="618"/>
    </location>
</feature>